<keyword id="KW-0175">Coiled coil</keyword>
<keyword id="KW-0238">DNA-binding</keyword>
<keyword id="KW-0479">Metal-binding</keyword>
<keyword id="KW-0539">Nucleus</keyword>
<keyword id="KW-0804">Transcription</keyword>
<keyword id="KW-0805">Transcription regulation</keyword>
<keyword id="KW-0862">Zinc</keyword>
<gene>
    <name evidence="4" type="primary">SAT20</name>
    <name type="ORF">S7711_07410</name>
</gene>
<protein>
    <recommendedName>
        <fullName evidence="4">Satratoxin biosynthesis SC3 cluster transcription factor SAT20</fullName>
    </recommendedName>
    <alternativeName>
        <fullName evidence="4">Satratoxin biosynthesis SC3 cluster protein 20</fullName>
    </alternativeName>
</protein>
<sequence length="712" mass="80033">MPNLPGSSDSTQRHQRNPGTDELVCSSTKPNAAQENADTELAQEKHPQLLSPQTDIPPVCSQPNVSFAQCWDQNFFLDAALTGQNSMTLLGVFDLPNSHMNLTETLSSQLGLEPSQNAFGQGSFDPFVPSSEPSVHSTDNPWPSLPTQLAFQPTNNNTSSLALLGPDPEQLSTLPSSWTGPLDEWPPLDLGQDFAALLSPTYQAFEATPRHTHAHAHQPPRATRHITSQQSPEPYVQVHSTAKIVDRFLVPIAPKPILVERDGPVSGASLPSNPPTALSSTGTRKRKRFNKADRERVNQMRKLGSCFRCRMYKENCDPGLPCKNCMRVQVTRRTFFGPCIRIKWEEVHTFRAGDGDLGQIRATLQTFQWTLGGQVKSIDVQWPFRDDKVKPPILSIECQQFLPKHEHVAEEYSVAGQAYKILLPPWACSNTKAASKKVEAFVRQCQAPLEEEIRHTLNDPILLLTLDEARRYRNETGSKLVATALEIYAGAMMNSRYPASTESDIFGVVDQLHTPYFFDKVPLPPQLTCQIQIMVAQVMLDKQKNALKRLQERALSKNRHKVWYECYLTIFILLATIELVYQVQLRFVKAKQGVSDRNATNLSYVTQYMIEEWEESILTLVGLFHCVMNGGLPFTQSWEDGGENHRLTELDDKALVYVRSLKAEIEQRRGELIALRNRRGRWRYEQPLAAICQLFLPSQDGDKGEGRAAPPS</sequence>
<comment type="function">
    <text evidence="6">Transcriptional regulator that may regulate the expression of the satratoxin biosynthesis SC3 cluster, one of the 3 clusters involved in the biosynthesis of satratoxins, trichothecene mycotoxins that are associated with human food poisonings (PubMed:25015739).</text>
</comment>
<comment type="subcellular location">
    <subcellularLocation>
        <location evidence="2">Nucleus</location>
    </subcellularLocation>
</comment>
<comment type="miscellaneous">
    <text evidence="5">Trichothecenes are sesquiterpenoid toxins that act by inhibiting protein biosynthesis.</text>
</comment>
<evidence type="ECO:0000255" key="1"/>
<evidence type="ECO:0000255" key="2">
    <source>
        <dbReference type="PROSITE-ProRule" id="PRU00227"/>
    </source>
</evidence>
<evidence type="ECO:0000256" key="3">
    <source>
        <dbReference type="SAM" id="MobiDB-lite"/>
    </source>
</evidence>
<evidence type="ECO:0000303" key="4">
    <source>
    </source>
</evidence>
<evidence type="ECO:0000305" key="5"/>
<evidence type="ECO:0000305" key="6">
    <source>
    </source>
</evidence>
<organism>
    <name type="scientific">Stachybotrys chartarum (strain CBS 109288 / IBT 7711)</name>
    <name type="common">Toxic black mold</name>
    <name type="synonym">Stilbospora chartarum</name>
    <dbReference type="NCBI Taxonomy" id="1280523"/>
    <lineage>
        <taxon>Eukaryota</taxon>
        <taxon>Fungi</taxon>
        <taxon>Dikarya</taxon>
        <taxon>Ascomycota</taxon>
        <taxon>Pezizomycotina</taxon>
        <taxon>Sordariomycetes</taxon>
        <taxon>Hypocreomycetidae</taxon>
        <taxon>Hypocreales</taxon>
        <taxon>Stachybotryaceae</taxon>
        <taxon>Stachybotrys</taxon>
    </lineage>
</organism>
<reference key="1">
    <citation type="journal article" date="2014" name="BMC Genomics">
        <title>Comparative genome sequencing reveals chemotype-specific gene clusters in the toxigenic black mold Stachybotrys.</title>
        <authorList>
            <person name="Semeiks J."/>
            <person name="Borek D."/>
            <person name="Otwinowski Z."/>
            <person name="Grishin N.V."/>
        </authorList>
    </citation>
    <scope>NUCLEOTIDE SEQUENCE [LARGE SCALE GENOMIC DNA]</scope>
    <scope>IDENTIFICATION</scope>
    <scope>FUNCTION</scope>
    <source>
        <strain>CBS 109288 / IBT 7711</strain>
    </source>
</reference>
<accession>A0A084AFG9</accession>
<proteinExistence type="inferred from homology"/>
<name>SAT20_STACB</name>
<feature type="chain" id="PRO_0000442409" description="Satratoxin biosynthesis SC3 cluster transcription factor SAT20">
    <location>
        <begin position="1"/>
        <end position="712"/>
    </location>
</feature>
<feature type="DNA-binding region" description="Zn(2)-C6 fungal-type" evidence="2">
    <location>
        <begin position="306"/>
        <end position="339"/>
    </location>
</feature>
<feature type="region of interest" description="Disordered" evidence="3">
    <location>
        <begin position="1"/>
        <end position="43"/>
    </location>
</feature>
<feature type="region of interest" description="Disordered" evidence="3">
    <location>
        <begin position="115"/>
        <end position="145"/>
    </location>
</feature>
<feature type="region of interest" description="Disordered" evidence="3">
    <location>
        <begin position="264"/>
        <end position="294"/>
    </location>
</feature>
<feature type="coiled-coil region" evidence="1">
    <location>
        <begin position="530"/>
        <end position="560"/>
    </location>
</feature>
<feature type="compositionally biased region" description="Polar residues" evidence="3">
    <location>
        <begin position="1"/>
        <end position="10"/>
    </location>
</feature>
<feature type="compositionally biased region" description="Polar residues" evidence="3">
    <location>
        <begin position="25"/>
        <end position="36"/>
    </location>
</feature>
<feature type="compositionally biased region" description="Polar residues" evidence="3">
    <location>
        <begin position="131"/>
        <end position="145"/>
    </location>
</feature>
<feature type="compositionally biased region" description="Polar residues" evidence="3">
    <location>
        <begin position="269"/>
        <end position="282"/>
    </location>
</feature>
<dbReference type="EMBL" id="KL648755">
    <property type="protein sequence ID" value="KEY64048.1"/>
    <property type="molecule type" value="Genomic_DNA"/>
</dbReference>
<dbReference type="HOGENOM" id="CLU_387879_0_0_1"/>
<dbReference type="OrthoDB" id="189133at5125"/>
<dbReference type="Proteomes" id="UP000028045">
    <property type="component" value="Unassembled WGS sequence"/>
</dbReference>
<dbReference type="GO" id="GO:0005634">
    <property type="term" value="C:nucleus"/>
    <property type="evidence" value="ECO:0007669"/>
    <property type="project" value="UniProtKB-SubCell"/>
</dbReference>
<dbReference type="GO" id="GO:0003677">
    <property type="term" value="F:DNA binding"/>
    <property type="evidence" value="ECO:0007669"/>
    <property type="project" value="UniProtKB-KW"/>
</dbReference>
<dbReference type="GO" id="GO:0000981">
    <property type="term" value="F:DNA-binding transcription factor activity, RNA polymerase II-specific"/>
    <property type="evidence" value="ECO:0007669"/>
    <property type="project" value="InterPro"/>
</dbReference>
<dbReference type="GO" id="GO:0008270">
    <property type="term" value="F:zinc ion binding"/>
    <property type="evidence" value="ECO:0007669"/>
    <property type="project" value="InterPro"/>
</dbReference>
<dbReference type="InterPro" id="IPR052973">
    <property type="entry name" value="Fungal_sec-metab_reg_TF"/>
</dbReference>
<dbReference type="InterPro" id="IPR036864">
    <property type="entry name" value="Zn2-C6_fun-type_DNA-bd_sf"/>
</dbReference>
<dbReference type="PANTHER" id="PTHR35392:SF3">
    <property type="entry name" value="ZN(2)-C6 FUNGAL-TYPE DOMAIN-CONTAINING PROTEIN"/>
    <property type="match status" value="1"/>
</dbReference>
<dbReference type="PANTHER" id="PTHR35392">
    <property type="entry name" value="ZN(II)2CYS6 TRANSCRIPTION FACTOR (EUROFUNG)-RELATED-RELATED"/>
    <property type="match status" value="1"/>
</dbReference>
<dbReference type="SUPFAM" id="SSF57701">
    <property type="entry name" value="Zn2/Cys6 DNA-binding domain"/>
    <property type="match status" value="1"/>
</dbReference>